<evidence type="ECO:0000255" key="1">
    <source>
        <dbReference type="HAMAP-Rule" id="MF_01493"/>
    </source>
</evidence>
<evidence type="ECO:0000256" key="2">
    <source>
        <dbReference type="SAM" id="MobiDB-lite"/>
    </source>
</evidence>
<sequence length="509" mass="57852">MQNFKELGISDKTVQTLEAMGFKEPTPIQKDSIPYALEGDDILGQAQTGTGKTGAFGIPLIEKVVGQQGVQSLILAPTRELAMQVAEQLREFSKGQKVQVVTVFGGMPIERQIKALKRGPQIVVGTPGRVIDHLNRRTLKTQGIHTLILDEADEMMNMGFIDDMRFIMDKIPAEQRQTMLFSATMPKAIQELVQQFMKAPKIIKTMNNEMSDPQIDEYYTIVKELEKFDTFTNFLDVHQPELAIVFGRTKRRVDELTSALLSKGYKAEGLHGDITQAKRLEVLKKFKNDQIDILVATDVAARGLDISGVSHVYNFDIPQDTESYTHRIGRTGRAGKEGIAVTFVNPIEMDYIRQIEDVNNRRMKALRPPHRKEVLKAREDDIKDRVQNWMSRENEPRLQRISSELLKEYDSTELVASLLQELVEANDEVEVQLTFEKPLARKNRSSKGGSRRSNHKRGNGKFDNKNRRSKGSKGQSSKKKNQKKFDRRDKQQKSGNQSLKGRTFADHQK</sequence>
<organism>
    <name type="scientific">Staphylococcus epidermidis (strain ATCC 35984 / DSM 28319 / BCRC 17069 / CCUG 31568 / BM 3577 / RP62A)</name>
    <dbReference type="NCBI Taxonomy" id="176279"/>
    <lineage>
        <taxon>Bacteria</taxon>
        <taxon>Bacillati</taxon>
        <taxon>Bacillota</taxon>
        <taxon>Bacilli</taxon>
        <taxon>Bacillales</taxon>
        <taxon>Staphylococcaceae</taxon>
        <taxon>Staphylococcus</taxon>
    </lineage>
</organism>
<accession>Q5HME0</accession>
<protein>
    <recommendedName>
        <fullName evidence="1">DEAD-box ATP-dependent RNA helicase CshA</fullName>
        <ecNumber evidence="1">3.6.4.13</ecNumber>
    </recommendedName>
</protein>
<dbReference type="EC" id="3.6.4.13" evidence="1"/>
<dbReference type="EMBL" id="CP000029">
    <property type="protein sequence ID" value="AAW55051.1"/>
    <property type="molecule type" value="Genomic_DNA"/>
</dbReference>
<dbReference type="RefSeq" id="WP_002457112.1">
    <property type="nucleotide sequence ID" value="NC_002976.3"/>
</dbReference>
<dbReference type="SMR" id="Q5HME0"/>
<dbReference type="STRING" id="176279.SERP1688"/>
<dbReference type="KEGG" id="ser:SERP1688"/>
<dbReference type="eggNOG" id="COG0513">
    <property type="taxonomic scope" value="Bacteria"/>
</dbReference>
<dbReference type="HOGENOM" id="CLU_003041_21_1_9"/>
<dbReference type="Proteomes" id="UP000000531">
    <property type="component" value="Chromosome"/>
</dbReference>
<dbReference type="GO" id="GO:0005829">
    <property type="term" value="C:cytosol"/>
    <property type="evidence" value="ECO:0007669"/>
    <property type="project" value="TreeGrafter"/>
</dbReference>
<dbReference type="GO" id="GO:0005840">
    <property type="term" value="C:ribosome"/>
    <property type="evidence" value="ECO:0007669"/>
    <property type="project" value="TreeGrafter"/>
</dbReference>
<dbReference type="GO" id="GO:0005524">
    <property type="term" value="F:ATP binding"/>
    <property type="evidence" value="ECO:0007669"/>
    <property type="project" value="UniProtKB-UniRule"/>
</dbReference>
<dbReference type="GO" id="GO:0016887">
    <property type="term" value="F:ATP hydrolysis activity"/>
    <property type="evidence" value="ECO:0007669"/>
    <property type="project" value="RHEA"/>
</dbReference>
<dbReference type="GO" id="GO:0003724">
    <property type="term" value="F:RNA helicase activity"/>
    <property type="evidence" value="ECO:0007669"/>
    <property type="project" value="UniProtKB-UniRule"/>
</dbReference>
<dbReference type="GO" id="GO:0033592">
    <property type="term" value="F:RNA strand annealing activity"/>
    <property type="evidence" value="ECO:0007669"/>
    <property type="project" value="TreeGrafter"/>
</dbReference>
<dbReference type="GO" id="GO:0009409">
    <property type="term" value="P:response to cold"/>
    <property type="evidence" value="ECO:0007669"/>
    <property type="project" value="TreeGrafter"/>
</dbReference>
<dbReference type="GO" id="GO:0006401">
    <property type="term" value="P:RNA catabolic process"/>
    <property type="evidence" value="ECO:0007669"/>
    <property type="project" value="UniProtKB-UniRule"/>
</dbReference>
<dbReference type="CDD" id="cd00268">
    <property type="entry name" value="DEADc"/>
    <property type="match status" value="1"/>
</dbReference>
<dbReference type="CDD" id="cd18787">
    <property type="entry name" value="SF2_C_DEAD"/>
    <property type="match status" value="1"/>
</dbReference>
<dbReference type="FunFam" id="3.40.50.300:FF:000108">
    <property type="entry name" value="ATP-dependent RNA helicase RhlE"/>
    <property type="match status" value="1"/>
</dbReference>
<dbReference type="Gene3D" id="3.40.50.300">
    <property type="entry name" value="P-loop containing nucleotide triphosphate hydrolases"/>
    <property type="match status" value="2"/>
</dbReference>
<dbReference type="HAMAP" id="MF_01493">
    <property type="entry name" value="DEAD_helicase_CshA"/>
    <property type="match status" value="1"/>
</dbReference>
<dbReference type="InterPro" id="IPR011545">
    <property type="entry name" value="DEAD/DEAH_box_helicase_dom"/>
</dbReference>
<dbReference type="InterPro" id="IPR050547">
    <property type="entry name" value="DEAD_box_RNA_helicases"/>
</dbReference>
<dbReference type="InterPro" id="IPR030880">
    <property type="entry name" value="DEAD_helicase_CshA"/>
</dbReference>
<dbReference type="InterPro" id="IPR014001">
    <property type="entry name" value="Helicase_ATP-bd"/>
</dbReference>
<dbReference type="InterPro" id="IPR001650">
    <property type="entry name" value="Helicase_C-like"/>
</dbReference>
<dbReference type="InterPro" id="IPR027417">
    <property type="entry name" value="P-loop_NTPase"/>
</dbReference>
<dbReference type="InterPro" id="IPR000629">
    <property type="entry name" value="RNA-helicase_DEAD-box_CS"/>
</dbReference>
<dbReference type="InterPro" id="IPR014014">
    <property type="entry name" value="RNA_helicase_DEAD_Q_motif"/>
</dbReference>
<dbReference type="PANTHER" id="PTHR47963">
    <property type="entry name" value="DEAD-BOX ATP-DEPENDENT RNA HELICASE 47, MITOCHONDRIAL"/>
    <property type="match status" value="1"/>
</dbReference>
<dbReference type="PANTHER" id="PTHR47963:SF5">
    <property type="entry name" value="DEAD-BOX ATP-DEPENDENT RNA HELICASE CSHA"/>
    <property type="match status" value="1"/>
</dbReference>
<dbReference type="Pfam" id="PF00270">
    <property type="entry name" value="DEAD"/>
    <property type="match status" value="1"/>
</dbReference>
<dbReference type="Pfam" id="PF00271">
    <property type="entry name" value="Helicase_C"/>
    <property type="match status" value="1"/>
</dbReference>
<dbReference type="SMART" id="SM00487">
    <property type="entry name" value="DEXDc"/>
    <property type="match status" value="1"/>
</dbReference>
<dbReference type="SMART" id="SM00490">
    <property type="entry name" value="HELICc"/>
    <property type="match status" value="1"/>
</dbReference>
<dbReference type="SUPFAM" id="SSF52540">
    <property type="entry name" value="P-loop containing nucleoside triphosphate hydrolases"/>
    <property type="match status" value="1"/>
</dbReference>
<dbReference type="PROSITE" id="PS00039">
    <property type="entry name" value="DEAD_ATP_HELICASE"/>
    <property type="match status" value="1"/>
</dbReference>
<dbReference type="PROSITE" id="PS51192">
    <property type="entry name" value="HELICASE_ATP_BIND_1"/>
    <property type="match status" value="1"/>
</dbReference>
<dbReference type="PROSITE" id="PS51194">
    <property type="entry name" value="HELICASE_CTER"/>
    <property type="match status" value="1"/>
</dbReference>
<dbReference type="PROSITE" id="PS51195">
    <property type="entry name" value="Q_MOTIF"/>
    <property type="match status" value="1"/>
</dbReference>
<keyword id="KW-0067">ATP-binding</keyword>
<keyword id="KW-0963">Cytoplasm</keyword>
<keyword id="KW-0347">Helicase</keyword>
<keyword id="KW-0378">Hydrolase</keyword>
<keyword id="KW-0547">Nucleotide-binding</keyword>
<keyword id="KW-1185">Reference proteome</keyword>
<keyword id="KW-0694">RNA-binding</keyword>
<keyword id="KW-0346">Stress response</keyword>
<comment type="function">
    <text evidence="1">DEAD-box RNA helicase possibly involved in RNA degradation. Unwinds dsRNA in both 5'- and 3'-directions, has RNA-dependent ATPase activity.</text>
</comment>
<comment type="catalytic activity">
    <reaction evidence="1">
        <text>ATP + H2O = ADP + phosphate + H(+)</text>
        <dbReference type="Rhea" id="RHEA:13065"/>
        <dbReference type="ChEBI" id="CHEBI:15377"/>
        <dbReference type="ChEBI" id="CHEBI:15378"/>
        <dbReference type="ChEBI" id="CHEBI:30616"/>
        <dbReference type="ChEBI" id="CHEBI:43474"/>
        <dbReference type="ChEBI" id="CHEBI:456216"/>
        <dbReference type="EC" id="3.6.4.13"/>
    </reaction>
</comment>
<comment type="subunit">
    <text evidence="1">Oligomerizes, may be a member of the RNA degradosome.</text>
</comment>
<comment type="subcellular location">
    <subcellularLocation>
        <location evidence="1">Cytoplasm</location>
    </subcellularLocation>
</comment>
<comment type="similarity">
    <text evidence="1">Belongs to the DEAD box helicase family. CshA subfamily.</text>
</comment>
<gene>
    <name evidence="1" type="primary">cshA</name>
    <name type="ordered locus">SERP1688</name>
</gene>
<feature type="chain" id="PRO_0000284828" description="DEAD-box ATP-dependent RNA helicase CshA">
    <location>
        <begin position="1"/>
        <end position="509"/>
    </location>
</feature>
<feature type="domain" description="Helicase ATP-binding" evidence="1">
    <location>
        <begin position="33"/>
        <end position="203"/>
    </location>
</feature>
<feature type="domain" description="Helicase C-terminal" evidence="1">
    <location>
        <begin position="214"/>
        <end position="375"/>
    </location>
</feature>
<feature type="region of interest" description="Disordered" evidence="2">
    <location>
        <begin position="440"/>
        <end position="509"/>
    </location>
</feature>
<feature type="short sequence motif" description="Q motif">
    <location>
        <begin position="2"/>
        <end position="30"/>
    </location>
</feature>
<feature type="short sequence motif" description="DEAD box">
    <location>
        <begin position="150"/>
        <end position="153"/>
    </location>
</feature>
<feature type="compositionally biased region" description="Basic residues" evidence="2">
    <location>
        <begin position="440"/>
        <end position="459"/>
    </location>
</feature>
<feature type="compositionally biased region" description="Basic residues" evidence="2">
    <location>
        <begin position="467"/>
        <end position="482"/>
    </location>
</feature>
<feature type="compositionally biased region" description="Basic and acidic residues" evidence="2">
    <location>
        <begin position="483"/>
        <end position="492"/>
    </location>
</feature>
<feature type="binding site" evidence="1">
    <location>
        <begin position="46"/>
        <end position="53"/>
    </location>
    <ligand>
        <name>ATP</name>
        <dbReference type="ChEBI" id="CHEBI:30616"/>
    </ligand>
</feature>
<name>CSHA_STAEQ</name>
<reference key="1">
    <citation type="journal article" date="2005" name="J. Bacteriol.">
        <title>Insights on evolution of virulence and resistance from the complete genome analysis of an early methicillin-resistant Staphylococcus aureus strain and a biofilm-producing methicillin-resistant Staphylococcus epidermidis strain.</title>
        <authorList>
            <person name="Gill S.R."/>
            <person name="Fouts D.E."/>
            <person name="Archer G.L."/>
            <person name="Mongodin E.F."/>
            <person name="DeBoy R.T."/>
            <person name="Ravel J."/>
            <person name="Paulsen I.T."/>
            <person name="Kolonay J.F."/>
            <person name="Brinkac L.M."/>
            <person name="Beanan M.J."/>
            <person name="Dodson R.J."/>
            <person name="Daugherty S.C."/>
            <person name="Madupu R."/>
            <person name="Angiuoli S.V."/>
            <person name="Durkin A.S."/>
            <person name="Haft D.H."/>
            <person name="Vamathevan J.J."/>
            <person name="Khouri H."/>
            <person name="Utterback T.R."/>
            <person name="Lee C."/>
            <person name="Dimitrov G."/>
            <person name="Jiang L."/>
            <person name="Qin H."/>
            <person name="Weidman J."/>
            <person name="Tran K."/>
            <person name="Kang K.H."/>
            <person name="Hance I.R."/>
            <person name="Nelson K.E."/>
            <person name="Fraser C.M."/>
        </authorList>
    </citation>
    <scope>NUCLEOTIDE SEQUENCE [LARGE SCALE GENOMIC DNA]</scope>
    <source>
        <strain>ATCC 35984 / DSM 28319 / BCRC 17069 / CCUG 31568 / BM 3577 / RP62A</strain>
    </source>
</reference>
<proteinExistence type="inferred from homology"/>